<proteinExistence type="evidence at protein level"/>
<organism>
    <name type="scientific">Staphylococcus aureus (strain Newman)</name>
    <dbReference type="NCBI Taxonomy" id="426430"/>
    <lineage>
        <taxon>Bacteria</taxon>
        <taxon>Bacillati</taxon>
        <taxon>Bacillota</taxon>
        <taxon>Bacilli</taxon>
        <taxon>Bacillales</taxon>
        <taxon>Staphylococcaceae</taxon>
        <taxon>Staphylococcus</taxon>
    </lineage>
</organism>
<accession>A0A0H3K7M3</accession>
<sequence>MNNNITKKIILSTTLLLLGTASTQFPNTPINSSSEAKAYYINQNETNVNELTKYYSQKYLTFSNSTLWQKDNGTIHATLLQFSWYSHIQVYGPESWGNINQLRNKSVDIFGIKDQETIDSFALSQETFTGGVTPAATSNDKHYKLNVTYKDKAETFTGGFPVYEGNKPVLTLKELDFRIRQTLIKSKKLYNNSYNKGQIKITGADNNYTIDLSKRLPSTDANRYVKKPQNAKIEVILEKSN</sequence>
<evidence type="ECO:0000255" key="1"/>
<evidence type="ECO:0000269" key="2">
    <source>
    </source>
</evidence>
<evidence type="ECO:0000303" key="3">
    <source>
    </source>
</evidence>
<evidence type="ECO:0000305" key="4"/>
<dbReference type="EMBL" id="AP009351">
    <property type="protein sequence ID" value="BAF67348.1"/>
    <property type="molecule type" value="Genomic_DNA"/>
</dbReference>
<dbReference type="RefSeq" id="WP_001063559.1">
    <property type="nucleotide sequence ID" value="NZ_JBBIAE010000001.1"/>
</dbReference>
<dbReference type="SMR" id="A0A0H3K7M3"/>
<dbReference type="KEGG" id="sae:NWMN_1076"/>
<dbReference type="HOGENOM" id="CLU_100596_0_0_9"/>
<dbReference type="Proteomes" id="UP000006386">
    <property type="component" value="Chromosome"/>
</dbReference>
<dbReference type="GO" id="GO:0005576">
    <property type="term" value="C:extracellular region"/>
    <property type="evidence" value="ECO:0007669"/>
    <property type="project" value="InterPro"/>
</dbReference>
<dbReference type="Gene3D" id="2.40.50.110">
    <property type="match status" value="1"/>
</dbReference>
<dbReference type="Gene3D" id="3.10.20.120">
    <property type="match status" value="1"/>
</dbReference>
<dbReference type="InterPro" id="IPR006126">
    <property type="entry name" value="Staph/Strept_toxin_CS"/>
</dbReference>
<dbReference type="InterPro" id="IPR008375">
    <property type="entry name" value="Staph_exotoxin"/>
</dbReference>
<dbReference type="InterPro" id="IPR016091">
    <property type="entry name" value="SuperAg_toxin_C"/>
</dbReference>
<dbReference type="InterPro" id="IPR013307">
    <property type="entry name" value="Superantigen_bac"/>
</dbReference>
<dbReference type="InterPro" id="IPR006123">
    <property type="entry name" value="Toxin_b-grasp_Staph/Strep"/>
</dbReference>
<dbReference type="NCBIfam" id="NF009889">
    <property type="entry name" value="PRK13349.1"/>
    <property type="match status" value="1"/>
</dbReference>
<dbReference type="Pfam" id="PF02876">
    <property type="entry name" value="Stap_Strp_tox_C"/>
    <property type="match status" value="1"/>
</dbReference>
<dbReference type="PRINTS" id="PR01898">
    <property type="entry name" value="SAGSUPRFAMLY"/>
</dbReference>
<dbReference type="PRINTS" id="PR01800">
    <property type="entry name" value="STAPHEXOTOXN"/>
</dbReference>
<dbReference type="PRINTS" id="PR01501">
    <property type="entry name" value="TOXICSSTOXIN"/>
</dbReference>
<dbReference type="SUPFAM" id="SSF54334">
    <property type="entry name" value="Superantigen toxins, C-terminal domain"/>
    <property type="match status" value="1"/>
</dbReference>
<dbReference type="PROSITE" id="PS00278">
    <property type="entry name" value="STAPH_STREP_TOXIN_2"/>
    <property type="match status" value="1"/>
</dbReference>
<comment type="function">
    <text evidence="2">Acts as a pathogen alarming molecule by acting on host neutrophil chemotactic factors FPR2. Plays a role of chemoattractant and induces degranulation and oxidative burst in neutrophils.</text>
</comment>
<comment type="subunit">
    <text evidence="2">Interacts with host FPR2; this interaction promotes neutrophil chemotaxis.</text>
</comment>
<comment type="similarity">
    <text evidence="4">Belongs to the staphylococcal/streptococcal toxin family.</text>
</comment>
<protein>
    <recommendedName>
        <fullName evidence="3">Superantigen-like protein 13</fullName>
    </recommendedName>
</protein>
<name>SSL13_STAAE</name>
<reference key="1">
    <citation type="journal article" date="2008" name="J. Bacteriol.">
        <title>Genome sequence of Staphylococcus aureus strain Newman and comparative analysis of staphylococcal genomes: polymorphism and evolution of two major pathogenicity islands.</title>
        <authorList>
            <person name="Baba T."/>
            <person name="Bae T."/>
            <person name="Schneewind O."/>
            <person name="Takeuchi F."/>
            <person name="Hiramatsu K."/>
        </authorList>
    </citation>
    <scope>NUCLEOTIDE SEQUENCE [LARGE SCALE GENOMIC DNA]</scope>
    <source>
        <strain>Newman</strain>
    </source>
</reference>
<reference key="2">
    <citation type="journal article" date="2018" name="Cell. Microbiol.">
        <title>Staphylococcal superantigen-like protein 13 activates neutrophils via formyl peptide receptor 2.</title>
        <authorList>
            <person name="Zhao Y."/>
            <person name="van Kessel K.P.M."/>
            <person name="de Haas C.J.C."/>
            <person name="Rogers M.R.C."/>
            <person name="van Strijp J.A.G."/>
            <person name="Haas P.A."/>
        </authorList>
    </citation>
    <scope>FUNCTION</scope>
    <scope>INTERACTION WITH HOST FPR2</scope>
</reference>
<gene>
    <name evidence="3" type="primary">ssl13</name>
    <name type="ordered locus">NWMN_1076</name>
</gene>
<feature type="signal peptide" evidence="1">
    <location>
        <begin position="1"/>
        <end position="26"/>
    </location>
</feature>
<feature type="chain" id="PRO_5002613268" description="Superantigen-like protein 13">
    <location>
        <begin position="27"/>
        <end position="241"/>
    </location>
</feature>
<keyword id="KW-0732">Signal</keyword>
<keyword id="KW-0843">Virulence</keyword>